<dbReference type="EC" id="2.5.1.7" evidence="1"/>
<dbReference type="EMBL" id="AE017196">
    <property type="protein sequence ID" value="AAS14843.1"/>
    <property type="molecule type" value="Genomic_DNA"/>
</dbReference>
<dbReference type="RefSeq" id="WP_010963092.1">
    <property type="nucleotide sequence ID" value="NZ_OX384529.1"/>
</dbReference>
<dbReference type="SMR" id="Q73FX6"/>
<dbReference type="EnsemblBacteria" id="AAS14843">
    <property type="protein sequence ID" value="AAS14843"/>
    <property type="gene ID" value="WD_1197"/>
</dbReference>
<dbReference type="GeneID" id="70036663"/>
<dbReference type="KEGG" id="wol:WD_1197"/>
<dbReference type="eggNOG" id="COG0766">
    <property type="taxonomic scope" value="Bacteria"/>
</dbReference>
<dbReference type="UniPathway" id="UPA00219"/>
<dbReference type="Proteomes" id="UP000008215">
    <property type="component" value="Chromosome"/>
</dbReference>
<dbReference type="GO" id="GO:0005737">
    <property type="term" value="C:cytoplasm"/>
    <property type="evidence" value="ECO:0007669"/>
    <property type="project" value="UniProtKB-SubCell"/>
</dbReference>
<dbReference type="GO" id="GO:0008760">
    <property type="term" value="F:UDP-N-acetylglucosamine 1-carboxyvinyltransferase activity"/>
    <property type="evidence" value="ECO:0007669"/>
    <property type="project" value="UniProtKB-UniRule"/>
</dbReference>
<dbReference type="GO" id="GO:0051301">
    <property type="term" value="P:cell division"/>
    <property type="evidence" value="ECO:0007669"/>
    <property type="project" value="UniProtKB-KW"/>
</dbReference>
<dbReference type="GO" id="GO:0071555">
    <property type="term" value="P:cell wall organization"/>
    <property type="evidence" value="ECO:0007669"/>
    <property type="project" value="UniProtKB-KW"/>
</dbReference>
<dbReference type="GO" id="GO:0009252">
    <property type="term" value="P:peptidoglycan biosynthetic process"/>
    <property type="evidence" value="ECO:0007669"/>
    <property type="project" value="UniProtKB-UniRule"/>
</dbReference>
<dbReference type="GO" id="GO:0008360">
    <property type="term" value="P:regulation of cell shape"/>
    <property type="evidence" value="ECO:0007669"/>
    <property type="project" value="UniProtKB-KW"/>
</dbReference>
<dbReference type="GO" id="GO:0019277">
    <property type="term" value="P:UDP-N-acetylgalactosamine biosynthetic process"/>
    <property type="evidence" value="ECO:0007669"/>
    <property type="project" value="InterPro"/>
</dbReference>
<dbReference type="CDD" id="cd01555">
    <property type="entry name" value="UdpNAET"/>
    <property type="match status" value="1"/>
</dbReference>
<dbReference type="Gene3D" id="3.65.10.10">
    <property type="entry name" value="Enolpyruvate transferase domain"/>
    <property type="match status" value="2"/>
</dbReference>
<dbReference type="HAMAP" id="MF_00111">
    <property type="entry name" value="MurA"/>
    <property type="match status" value="1"/>
</dbReference>
<dbReference type="InterPro" id="IPR001986">
    <property type="entry name" value="Enolpyruvate_Tfrase_dom"/>
</dbReference>
<dbReference type="InterPro" id="IPR036968">
    <property type="entry name" value="Enolpyruvate_Tfrase_sf"/>
</dbReference>
<dbReference type="InterPro" id="IPR050068">
    <property type="entry name" value="MurA_subfamily"/>
</dbReference>
<dbReference type="InterPro" id="IPR013792">
    <property type="entry name" value="RNA3'P_cycl/enolpyr_Trfase_a/b"/>
</dbReference>
<dbReference type="InterPro" id="IPR005750">
    <property type="entry name" value="UDP_GlcNAc_COvinyl_MurA"/>
</dbReference>
<dbReference type="NCBIfam" id="TIGR01072">
    <property type="entry name" value="murA"/>
    <property type="match status" value="1"/>
</dbReference>
<dbReference type="NCBIfam" id="NF006873">
    <property type="entry name" value="PRK09369.1"/>
    <property type="match status" value="1"/>
</dbReference>
<dbReference type="PANTHER" id="PTHR43783">
    <property type="entry name" value="UDP-N-ACETYLGLUCOSAMINE 1-CARBOXYVINYLTRANSFERASE"/>
    <property type="match status" value="1"/>
</dbReference>
<dbReference type="PANTHER" id="PTHR43783:SF1">
    <property type="entry name" value="UDP-N-ACETYLGLUCOSAMINE 1-CARBOXYVINYLTRANSFERASE"/>
    <property type="match status" value="1"/>
</dbReference>
<dbReference type="Pfam" id="PF00275">
    <property type="entry name" value="EPSP_synthase"/>
    <property type="match status" value="1"/>
</dbReference>
<dbReference type="SUPFAM" id="SSF55205">
    <property type="entry name" value="EPT/RTPC-like"/>
    <property type="match status" value="1"/>
</dbReference>
<reference key="1">
    <citation type="journal article" date="2004" name="PLoS Biol.">
        <title>Phylogenomics of the reproductive parasite Wolbachia pipientis wMel: a streamlined genome overrun by mobile genetic elements.</title>
        <authorList>
            <person name="Wu M."/>
            <person name="Sun L.V."/>
            <person name="Vamathevan J.J."/>
            <person name="Riegler M."/>
            <person name="DeBoy R.T."/>
            <person name="Brownlie J.C."/>
            <person name="McGraw E.A."/>
            <person name="Martin W."/>
            <person name="Esser C."/>
            <person name="Ahmadinejad N."/>
            <person name="Wiegand C."/>
            <person name="Madupu R."/>
            <person name="Beanan M.J."/>
            <person name="Brinkac L.M."/>
            <person name="Daugherty S.C."/>
            <person name="Durkin A.S."/>
            <person name="Kolonay J.F."/>
            <person name="Nelson W.C."/>
            <person name="Mohamoud Y."/>
            <person name="Lee P."/>
            <person name="Berry K.J."/>
            <person name="Young M.B."/>
            <person name="Utterback T.R."/>
            <person name="Weidman J.F."/>
            <person name="Nierman W.C."/>
            <person name="Paulsen I.T."/>
            <person name="Nelson K.E."/>
            <person name="Tettelin H."/>
            <person name="O'Neill S.L."/>
            <person name="Eisen J.A."/>
        </authorList>
    </citation>
    <scope>NUCLEOTIDE SEQUENCE [LARGE SCALE GENOMIC DNA]</scope>
</reference>
<name>MURA_WOLPM</name>
<proteinExistence type="inferred from homology"/>
<protein>
    <recommendedName>
        <fullName evidence="1">UDP-N-acetylglucosamine 1-carboxyvinyltransferase</fullName>
        <ecNumber evidence="1">2.5.1.7</ecNumber>
    </recommendedName>
    <alternativeName>
        <fullName evidence="1">Enoylpyruvate transferase</fullName>
    </alternativeName>
    <alternativeName>
        <fullName evidence="1">UDP-N-acetylglucosamine enolpyruvyl transferase</fullName>
        <shortName evidence="1">EPT</shortName>
    </alternativeName>
</protein>
<sequence>MHKILIRNNYKPLVGKIKINGSKNAVLPIMAASLLSSSSVILHNVPDLIDVHLMSKLLESLGAEVNFMHNKNYKANHTLKIDCSNINNHVMPYKTASKLRTSFLILGPMLSRFGKARTAFPGGCNIGKRPVDMHIKALEEMGAKIEIDGYNIIATVKGKLQGKEITFEKISVGATENVIMAATFAEGVTTINNAATEPEVLDLIDFLKKMGADIEIDNTKVIITGVEALNGCVHKIIPDRIEAGTYALAAIITGGKLELEGINLSDIRCITNELETIGAMVELYDGGIVISRKNGSIKSANVATDPYPNFPSDMQPQLMSAMCIADGISVIEENIFENRFTHADELRKLGANISIEKSKATISGIKSLSGANLYATDLRSTAALVLASLVAGGETIINNSHHLWRGYEAMHEKLNSCGADISISS</sequence>
<accession>Q73FX6</accession>
<comment type="function">
    <text evidence="1">Cell wall formation. Adds enolpyruvyl to UDP-N-acetylglucosamine.</text>
</comment>
<comment type="catalytic activity">
    <reaction evidence="1">
        <text>phosphoenolpyruvate + UDP-N-acetyl-alpha-D-glucosamine = UDP-N-acetyl-3-O-(1-carboxyvinyl)-alpha-D-glucosamine + phosphate</text>
        <dbReference type="Rhea" id="RHEA:18681"/>
        <dbReference type="ChEBI" id="CHEBI:43474"/>
        <dbReference type="ChEBI" id="CHEBI:57705"/>
        <dbReference type="ChEBI" id="CHEBI:58702"/>
        <dbReference type="ChEBI" id="CHEBI:68483"/>
        <dbReference type="EC" id="2.5.1.7"/>
    </reaction>
</comment>
<comment type="pathway">
    <text evidence="1">Cell wall biogenesis; peptidoglycan biosynthesis.</text>
</comment>
<comment type="subcellular location">
    <subcellularLocation>
        <location evidence="1">Cytoplasm</location>
    </subcellularLocation>
</comment>
<comment type="similarity">
    <text evidence="1">Belongs to the EPSP synthase family. MurA subfamily.</text>
</comment>
<feature type="chain" id="PRO_0000231298" description="UDP-N-acetylglucosamine 1-carboxyvinyltransferase">
    <location>
        <begin position="1"/>
        <end position="425"/>
    </location>
</feature>
<feature type="active site" description="Proton donor" evidence="1">
    <location>
        <position position="124"/>
    </location>
</feature>
<feature type="binding site" evidence="1">
    <location>
        <begin position="23"/>
        <end position="24"/>
    </location>
    <ligand>
        <name>phosphoenolpyruvate</name>
        <dbReference type="ChEBI" id="CHEBI:58702"/>
    </ligand>
</feature>
<feature type="binding site" evidence="1">
    <location>
        <position position="100"/>
    </location>
    <ligand>
        <name>UDP-N-acetyl-alpha-D-glucosamine</name>
        <dbReference type="ChEBI" id="CHEBI:57705"/>
    </ligand>
</feature>
<feature type="binding site" evidence="1">
    <location>
        <position position="313"/>
    </location>
    <ligand>
        <name>UDP-N-acetyl-alpha-D-glucosamine</name>
        <dbReference type="ChEBI" id="CHEBI:57705"/>
    </ligand>
</feature>
<feature type="binding site" evidence="1">
    <location>
        <position position="335"/>
    </location>
    <ligand>
        <name>UDP-N-acetyl-alpha-D-glucosamine</name>
        <dbReference type="ChEBI" id="CHEBI:57705"/>
    </ligand>
</feature>
<feature type="modified residue" description="2-(S-cysteinyl)pyruvic acid O-phosphothioketal" evidence="1">
    <location>
        <position position="124"/>
    </location>
</feature>
<organism>
    <name type="scientific">Wolbachia pipientis wMel</name>
    <dbReference type="NCBI Taxonomy" id="163164"/>
    <lineage>
        <taxon>Bacteria</taxon>
        <taxon>Pseudomonadati</taxon>
        <taxon>Pseudomonadota</taxon>
        <taxon>Alphaproteobacteria</taxon>
        <taxon>Rickettsiales</taxon>
        <taxon>Anaplasmataceae</taxon>
        <taxon>Wolbachieae</taxon>
        <taxon>Wolbachia</taxon>
    </lineage>
</organism>
<keyword id="KW-0131">Cell cycle</keyword>
<keyword id="KW-0132">Cell division</keyword>
<keyword id="KW-0133">Cell shape</keyword>
<keyword id="KW-0961">Cell wall biogenesis/degradation</keyword>
<keyword id="KW-0963">Cytoplasm</keyword>
<keyword id="KW-0573">Peptidoglycan synthesis</keyword>
<keyword id="KW-0670">Pyruvate</keyword>
<keyword id="KW-0808">Transferase</keyword>
<gene>
    <name evidence="1" type="primary">murA</name>
    <name type="ordered locus">WD_1197</name>
</gene>
<evidence type="ECO:0000255" key="1">
    <source>
        <dbReference type="HAMAP-Rule" id="MF_00111"/>
    </source>
</evidence>